<protein>
    <recommendedName>
        <fullName evidence="1">Endoribonuclease YbeY</fullName>
        <ecNumber evidence="1">3.1.-.-</ecNumber>
    </recommendedName>
</protein>
<sequence length="159" mass="17456">MDDAEILVDVQVVPQYAAVVDATLVERAVAQTLRTDDVAGPVEISILITDDADVHRLNQTYRGVDAPTDVLSFAEDDDHSFVRPPDAPRYLGDIAISWDRVVAQAAEYGHSRERELAFLVVHGVLHLLGYDHERGPVDEADMRAREEAILGALGLSREG</sequence>
<keyword id="KW-0963">Cytoplasm</keyword>
<keyword id="KW-0255">Endonuclease</keyword>
<keyword id="KW-0378">Hydrolase</keyword>
<keyword id="KW-0479">Metal-binding</keyword>
<keyword id="KW-0540">Nuclease</keyword>
<keyword id="KW-1185">Reference proteome</keyword>
<keyword id="KW-0690">Ribosome biogenesis</keyword>
<keyword id="KW-0698">rRNA processing</keyword>
<keyword id="KW-0862">Zinc</keyword>
<reference key="1">
    <citation type="submission" date="2007-08" db="EMBL/GenBank/DDBJ databases">
        <title>Complete sequence of Roseiflexus castenholzii DSM 13941.</title>
        <authorList>
            <consortium name="US DOE Joint Genome Institute"/>
            <person name="Copeland A."/>
            <person name="Lucas S."/>
            <person name="Lapidus A."/>
            <person name="Barry K."/>
            <person name="Glavina del Rio T."/>
            <person name="Dalin E."/>
            <person name="Tice H."/>
            <person name="Pitluck S."/>
            <person name="Thompson L.S."/>
            <person name="Brettin T."/>
            <person name="Bruce D."/>
            <person name="Detter J.C."/>
            <person name="Han C."/>
            <person name="Tapia R."/>
            <person name="Schmutz J."/>
            <person name="Larimer F."/>
            <person name="Land M."/>
            <person name="Hauser L."/>
            <person name="Kyrpides N."/>
            <person name="Mikhailova N."/>
            <person name="Bryant D.A."/>
            <person name="Hanada S."/>
            <person name="Tsukatani Y."/>
            <person name="Richardson P."/>
        </authorList>
    </citation>
    <scope>NUCLEOTIDE SEQUENCE [LARGE SCALE GENOMIC DNA]</scope>
    <source>
        <strain>DSM 13941 / HLO8</strain>
    </source>
</reference>
<evidence type="ECO:0000255" key="1">
    <source>
        <dbReference type="HAMAP-Rule" id="MF_00009"/>
    </source>
</evidence>
<gene>
    <name evidence="1" type="primary">ybeY</name>
    <name type="ordered locus">Rcas_4283</name>
</gene>
<organism>
    <name type="scientific">Roseiflexus castenholzii (strain DSM 13941 / HLO8)</name>
    <dbReference type="NCBI Taxonomy" id="383372"/>
    <lineage>
        <taxon>Bacteria</taxon>
        <taxon>Bacillati</taxon>
        <taxon>Chloroflexota</taxon>
        <taxon>Chloroflexia</taxon>
        <taxon>Chloroflexales</taxon>
        <taxon>Roseiflexineae</taxon>
        <taxon>Roseiflexaceae</taxon>
        <taxon>Roseiflexus</taxon>
    </lineage>
</organism>
<comment type="function">
    <text evidence="1">Single strand-specific metallo-endoribonuclease involved in late-stage 70S ribosome quality control and in maturation of the 3' terminus of the 16S rRNA.</text>
</comment>
<comment type="cofactor">
    <cofactor evidence="1">
        <name>Zn(2+)</name>
        <dbReference type="ChEBI" id="CHEBI:29105"/>
    </cofactor>
    <text evidence="1">Binds 1 zinc ion.</text>
</comment>
<comment type="subcellular location">
    <subcellularLocation>
        <location evidence="1">Cytoplasm</location>
    </subcellularLocation>
</comment>
<comment type="similarity">
    <text evidence="1">Belongs to the endoribonuclease YbeY family.</text>
</comment>
<dbReference type="EC" id="3.1.-.-" evidence="1"/>
<dbReference type="EMBL" id="CP000804">
    <property type="protein sequence ID" value="ABU60310.1"/>
    <property type="molecule type" value="Genomic_DNA"/>
</dbReference>
<dbReference type="RefSeq" id="WP_012122731.1">
    <property type="nucleotide sequence ID" value="NC_009767.1"/>
</dbReference>
<dbReference type="SMR" id="A7NRW4"/>
<dbReference type="STRING" id="383372.Rcas_4283"/>
<dbReference type="KEGG" id="rca:Rcas_4283"/>
<dbReference type="eggNOG" id="COG0319">
    <property type="taxonomic scope" value="Bacteria"/>
</dbReference>
<dbReference type="HOGENOM" id="CLU_106710_3_0_0"/>
<dbReference type="OrthoDB" id="9807740at2"/>
<dbReference type="Proteomes" id="UP000000263">
    <property type="component" value="Chromosome"/>
</dbReference>
<dbReference type="GO" id="GO:0005737">
    <property type="term" value="C:cytoplasm"/>
    <property type="evidence" value="ECO:0007669"/>
    <property type="project" value="UniProtKB-SubCell"/>
</dbReference>
<dbReference type="GO" id="GO:0004222">
    <property type="term" value="F:metalloendopeptidase activity"/>
    <property type="evidence" value="ECO:0007669"/>
    <property type="project" value="InterPro"/>
</dbReference>
<dbReference type="GO" id="GO:0004521">
    <property type="term" value="F:RNA endonuclease activity"/>
    <property type="evidence" value="ECO:0007669"/>
    <property type="project" value="UniProtKB-UniRule"/>
</dbReference>
<dbReference type="GO" id="GO:0008270">
    <property type="term" value="F:zinc ion binding"/>
    <property type="evidence" value="ECO:0007669"/>
    <property type="project" value="UniProtKB-UniRule"/>
</dbReference>
<dbReference type="GO" id="GO:0006364">
    <property type="term" value="P:rRNA processing"/>
    <property type="evidence" value="ECO:0007669"/>
    <property type="project" value="UniProtKB-UniRule"/>
</dbReference>
<dbReference type="Gene3D" id="3.40.390.30">
    <property type="entry name" value="Metalloproteases ('zincins'), catalytic domain"/>
    <property type="match status" value="1"/>
</dbReference>
<dbReference type="HAMAP" id="MF_00009">
    <property type="entry name" value="Endoribonucl_YbeY"/>
    <property type="match status" value="1"/>
</dbReference>
<dbReference type="InterPro" id="IPR023091">
    <property type="entry name" value="MetalPrtase_cat_dom_sf_prd"/>
</dbReference>
<dbReference type="InterPro" id="IPR002036">
    <property type="entry name" value="YbeY"/>
</dbReference>
<dbReference type="InterPro" id="IPR020549">
    <property type="entry name" value="YbeY_CS"/>
</dbReference>
<dbReference type="NCBIfam" id="TIGR00043">
    <property type="entry name" value="rRNA maturation RNase YbeY"/>
    <property type="match status" value="1"/>
</dbReference>
<dbReference type="PANTHER" id="PTHR46986">
    <property type="entry name" value="ENDORIBONUCLEASE YBEY, CHLOROPLASTIC"/>
    <property type="match status" value="1"/>
</dbReference>
<dbReference type="PANTHER" id="PTHR46986:SF1">
    <property type="entry name" value="ENDORIBONUCLEASE YBEY, CHLOROPLASTIC"/>
    <property type="match status" value="1"/>
</dbReference>
<dbReference type="Pfam" id="PF02130">
    <property type="entry name" value="YbeY"/>
    <property type="match status" value="1"/>
</dbReference>
<dbReference type="SUPFAM" id="SSF55486">
    <property type="entry name" value="Metalloproteases ('zincins'), catalytic domain"/>
    <property type="match status" value="1"/>
</dbReference>
<dbReference type="PROSITE" id="PS01306">
    <property type="entry name" value="UPF0054"/>
    <property type="match status" value="1"/>
</dbReference>
<feature type="chain" id="PRO_1000073915" description="Endoribonuclease YbeY">
    <location>
        <begin position="1"/>
        <end position="159"/>
    </location>
</feature>
<feature type="binding site" evidence="1">
    <location>
        <position position="122"/>
    </location>
    <ligand>
        <name>Zn(2+)</name>
        <dbReference type="ChEBI" id="CHEBI:29105"/>
        <note>catalytic</note>
    </ligand>
</feature>
<feature type="binding site" evidence="1">
    <location>
        <position position="126"/>
    </location>
    <ligand>
        <name>Zn(2+)</name>
        <dbReference type="ChEBI" id="CHEBI:29105"/>
        <note>catalytic</note>
    </ligand>
</feature>
<feature type="binding site" evidence="1">
    <location>
        <position position="132"/>
    </location>
    <ligand>
        <name>Zn(2+)</name>
        <dbReference type="ChEBI" id="CHEBI:29105"/>
        <note>catalytic</note>
    </ligand>
</feature>
<accession>A7NRW4</accession>
<name>YBEY_ROSCS</name>
<proteinExistence type="inferred from homology"/>